<dbReference type="EC" id="2.7.7.3" evidence="1"/>
<dbReference type="EMBL" id="AM743169">
    <property type="protein sequence ID" value="CAQ45332.1"/>
    <property type="molecule type" value="Genomic_DNA"/>
</dbReference>
<dbReference type="RefSeq" id="WP_005409091.1">
    <property type="nucleotide sequence ID" value="NC_010943.1"/>
</dbReference>
<dbReference type="SMR" id="B2FLW4"/>
<dbReference type="EnsemblBacteria" id="CAQ45332">
    <property type="protein sequence ID" value="CAQ45332"/>
    <property type="gene ID" value="Smlt1811"/>
</dbReference>
<dbReference type="GeneID" id="93833011"/>
<dbReference type="KEGG" id="sml:Smlt1811"/>
<dbReference type="eggNOG" id="COG0669">
    <property type="taxonomic scope" value="Bacteria"/>
</dbReference>
<dbReference type="HOGENOM" id="CLU_100149_0_1_6"/>
<dbReference type="UniPathway" id="UPA00241">
    <property type="reaction ID" value="UER00355"/>
</dbReference>
<dbReference type="Proteomes" id="UP000008840">
    <property type="component" value="Chromosome"/>
</dbReference>
<dbReference type="GO" id="GO:0005737">
    <property type="term" value="C:cytoplasm"/>
    <property type="evidence" value="ECO:0007669"/>
    <property type="project" value="UniProtKB-SubCell"/>
</dbReference>
<dbReference type="GO" id="GO:0005524">
    <property type="term" value="F:ATP binding"/>
    <property type="evidence" value="ECO:0007669"/>
    <property type="project" value="UniProtKB-KW"/>
</dbReference>
<dbReference type="GO" id="GO:0004595">
    <property type="term" value="F:pantetheine-phosphate adenylyltransferase activity"/>
    <property type="evidence" value="ECO:0007669"/>
    <property type="project" value="UniProtKB-UniRule"/>
</dbReference>
<dbReference type="GO" id="GO:0015937">
    <property type="term" value="P:coenzyme A biosynthetic process"/>
    <property type="evidence" value="ECO:0007669"/>
    <property type="project" value="UniProtKB-UniRule"/>
</dbReference>
<dbReference type="CDD" id="cd02163">
    <property type="entry name" value="PPAT"/>
    <property type="match status" value="1"/>
</dbReference>
<dbReference type="Gene3D" id="3.40.50.620">
    <property type="entry name" value="HUPs"/>
    <property type="match status" value="1"/>
</dbReference>
<dbReference type="HAMAP" id="MF_00151">
    <property type="entry name" value="PPAT_bact"/>
    <property type="match status" value="1"/>
</dbReference>
<dbReference type="InterPro" id="IPR004821">
    <property type="entry name" value="Cyt_trans-like"/>
</dbReference>
<dbReference type="InterPro" id="IPR001980">
    <property type="entry name" value="PPAT"/>
</dbReference>
<dbReference type="InterPro" id="IPR014729">
    <property type="entry name" value="Rossmann-like_a/b/a_fold"/>
</dbReference>
<dbReference type="NCBIfam" id="TIGR01510">
    <property type="entry name" value="coaD_prev_kdtB"/>
    <property type="match status" value="1"/>
</dbReference>
<dbReference type="NCBIfam" id="TIGR00125">
    <property type="entry name" value="cyt_tran_rel"/>
    <property type="match status" value="1"/>
</dbReference>
<dbReference type="PANTHER" id="PTHR21342">
    <property type="entry name" value="PHOSPHOPANTETHEINE ADENYLYLTRANSFERASE"/>
    <property type="match status" value="1"/>
</dbReference>
<dbReference type="PANTHER" id="PTHR21342:SF1">
    <property type="entry name" value="PHOSPHOPANTETHEINE ADENYLYLTRANSFERASE"/>
    <property type="match status" value="1"/>
</dbReference>
<dbReference type="Pfam" id="PF01467">
    <property type="entry name" value="CTP_transf_like"/>
    <property type="match status" value="1"/>
</dbReference>
<dbReference type="PRINTS" id="PR01020">
    <property type="entry name" value="LPSBIOSNTHSS"/>
</dbReference>
<dbReference type="SUPFAM" id="SSF52374">
    <property type="entry name" value="Nucleotidylyl transferase"/>
    <property type="match status" value="1"/>
</dbReference>
<comment type="function">
    <text evidence="1">Reversibly transfers an adenylyl group from ATP to 4'-phosphopantetheine, yielding dephospho-CoA (dPCoA) and pyrophosphate.</text>
</comment>
<comment type="catalytic activity">
    <reaction evidence="1">
        <text>(R)-4'-phosphopantetheine + ATP + H(+) = 3'-dephospho-CoA + diphosphate</text>
        <dbReference type="Rhea" id="RHEA:19801"/>
        <dbReference type="ChEBI" id="CHEBI:15378"/>
        <dbReference type="ChEBI" id="CHEBI:30616"/>
        <dbReference type="ChEBI" id="CHEBI:33019"/>
        <dbReference type="ChEBI" id="CHEBI:57328"/>
        <dbReference type="ChEBI" id="CHEBI:61723"/>
        <dbReference type="EC" id="2.7.7.3"/>
    </reaction>
</comment>
<comment type="cofactor">
    <cofactor evidence="1">
        <name>Mg(2+)</name>
        <dbReference type="ChEBI" id="CHEBI:18420"/>
    </cofactor>
</comment>
<comment type="pathway">
    <text evidence="1">Cofactor biosynthesis; coenzyme A biosynthesis; CoA from (R)-pantothenate: step 4/5.</text>
</comment>
<comment type="subunit">
    <text evidence="1">Homohexamer.</text>
</comment>
<comment type="subcellular location">
    <subcellularLocation>
        <location evidence="1">Cytoplasm</location>
    </subcellularLocation>
</comment>
<comment type="similarity">
    <text evidence="1">Belongs to the bacterial CoaD family.</text>
</comment>
<evidence type="ECO:0000255" key="1">
    <source>
        <dbReference type="HAMAP-Rule" id="MF_00151"/>
    </source>
</evidence>
<sequence length="169" mass="18264">MTVANRRIAVYPGTFDPITNGHIDLVSRAAPLFEKVVVGVAQSPSKGPALPLEQRVQLARGALGHHGNVEVIGFDTLLAHFVRSVQGGVLLRGLRAVSDFEYEFQMASMNRHLIPEVETLFLTPAEQHSFISSSLVREIARLGGDVSGFVPAAVLEALRKVREAKAAQS</sequence>
<proteinExistence type="inferred from homology"/>
<accession>B2FLW4</accession>
<gene>
    <name evidence="1" type="primary">coaD</name>
    <name type="ordered locus">Smlt1811</name>
</gene>
<feature type="chain" id="PRO_1000096845" description="Phosphopantetheine adenylyltransferase">
    <location>
        <begin position="1"/>
        <end position="169"/>
    </location>
</feature>
<feature type="binding site" evidence="1">
    <location>
        <begin position="14"/>
        <end position="15"/>
    </location>
    <ligand>
        <name>ATP</name>
        <dbReference type="ChEBI" id="CHEBI:30616"/>
    </ligand>
</feature>
<feature type="binding site" evidence="1">
    <location>
        <position position="14"/>
    </location>
    <ligand>
        <name>substrate</name>
    </ligand>
</feature>
<feature type="binding site" evidence="1">
    <location>
        <position position="22"/>
    </location>
    <ligand>
        <name>ATP</name>
        <dbReference type="ChEBI" id="CHEBI:30616"/>
    </ligand>
</feature>
<feature type="binding site" evidence="1">
    <location>
        <position position="46"/>
    </location>
    <ligand>
        <name>substrate</name>
    </ligand>
</feature>
<feature type="binding site" evidence="1">
    <location>
        <position position="78"/>
    </location>
    <ligand>
        <name>substrate</name>
    </ligand>
</feature>
<feature type="binding site" evidence="1">
    <location>
        <position position="92"/>
    </location>
    <ligand>
        <name>substrate</name>
    </ligand>
</feature>
<feature type="binding site" evidence="1">
    <location>
        <begin position="93"/>
        <end position="95"/>
    </location>
    <ligand>
        <name>ATP</name>
        <dbReference type="ChEBI" id="CHEBI:30616"/>
    </ligand>
</feature>
<feature type="binding site" evidence="1">
    <location>
        <position position="103"/>
    </location>
    <ligand>
        <name>ATP</name>
        <dbReference type="ChEBI" id="CHEBI:30616"/>
    </ligand>
</feature>
<feature type="binding site" evidence="1">
    <location>
        <begin position="128"/>
        <end position="134"/>
    </location>
    <ligand>
        <name>ATP</name>
        <dbReference type="ChEBI" id="CHEBI:30616"/>
    </ligand>
</feature>
<feature type="site" description="Transition state stabilizer" evidence="1">
    <location>
        <position position="22"/>
    </location>
</feature>
<reference key="1">
    <citation type="journal article" date="2008" name="Genome Biol.">
        <title>The complete genome, comparative and functional analysis of Stenotrophomonas maltophilia reveals an organism heavily shielded by drug resistance determinants.</title>
        <authorList>
            <person name="Crossman L.C."/>
            <person name="Gould V.C."/>
            <person name="Dow J.M."/>
            <person name="Vernikos G.S."/>
            <person name="Okazaki A."/>
            <person name="Sebaihia M."/>
            <person name="Saunders D."/>
            <person name="Arrowsmith C."/>
            <person name="Carver T."/>
            <person name="Peters N."/>
            <person name="Adlem E."/>
            <person name="Kerhornou A."/>
            <person name="Lord A."/>
            <person name="Murphy L."/>
            <person name="Seeger K."/>
            <person name="Squares R."/>
            <person name="Rutter S."/>
            <person name="Quail M.A."/>
            <person name="Rajandream M.A."/>
            <person name="Harris D."/>
            <person name="Churcher C."/>
            <person name="Bentley S.D."/>
            <person name="Parkhill J."/>
            <person name="Thomson N.R."/>
            <person name="Avison M.B."/>
        </authorList>
    </citation>
    <scope>NUCLEOTIDE SEQUENCE [LARGE SCALE GENOMIC DNA]</scope>
    <source>
        <strain>K279a</strain>
    </source>
</reference>
<protein>
    <recommendedName>
        <fullName evidence="1">Phosphopantetheine adenylyltransferase</fullName>
        <ecNumber evidence="1">2.7.7.3</ecNumber>
    </recommendedName>
    <alternativeName>
        <fullName evidence="1">Dephospho-CoA pyrophosphorylase</fullName>
    </alternativeName>
    <alternativeName>
        <fullName evidence="1">Pantetheine-phosphate adenylyltransferase</fullName>
        <shortName evidence="1">PPAT</shortName>
    </alternativeName>
</protein>
<keyword id="KW-0067">ATP-binding</keyword>
<keyword id="KW-0173">Coenzyme A biosynthesis</keyword>
<keyword id="KW-0963">Cytoplasm</keyword>
<keyword id="KW-0460">Magnesium</keyword>
<keyword id="KW-0547">Nucleotide-binding</keyword>
<keyword id="KW-0548">Nucleotidyltransferase</keyword>
<keyword id="KW-1185">Reference proteome</keyword>
<keyword id="KW-0808">Transferase</keyword>
<name>COAD_STRMK</name>
<organism>
    <name type="scientific">Stenotrophomonas maltophilia (strain K279a)</name>
    <dbReference type="NCBI Taxonomy" id="522373"/>
    <lineage>
        <taxon>Bacteria</taxon>
        <taxon>Pseudomonadati</taxon>
        <taxon>Pseudomonadota</taxon>
        <taxon>Gammaproteobacteria</taxon>
        <taxon>Lysobacterales</taxon>
        <taxon>Lysobacteraceae</taxon>
        <taxon>Stenotrophomonas</taxon>
        <taxon>Stenotrophomonas maltophilia group</taxon>
    </lineage>
</organism>